<keyword id="KW-1015">Disulfide bond</keyword>
<keyword id="KW-0325">Glycoprotein</keyword>
<keyword id="KW-0348">Hemagglutinin</keyword>
<keyword id="KW-1032">Host cell membrane</keyword>
<keyword id="KW-1043">Host membrane</keyword>
<keyword id="KW-0945">Host-virus interaction</keyword>
<keyword id="KW-0378">Hydrolase</keyword>
<keyword id="KW-0472">Membrane</keyword>
<keyword id="KW-0735">Signal-anchor</keyword>
<keyword id="KW-0812">Transmembrane</keyword>
<keyword id="KW-1133">Transmembrane helix</keyword>
<keyword id="KW-1161">Viral attachment to host cell</keyword>
<keyword id="KW-0261">Viral envelope protein</keyword>
<keyword id="KW-0946">Virion</keyword>
<keyword id="KW-1160">Virus entry into host cell</keyword>
<gene>
    <name type="primary">HN</name>
</gene>
<reference key="1">
    <citation type="journal article" date="1991" name="J. Gen. Virol.">
        <title>Sequence comparison between the haemagglutinin-neuraminidase genes of simian, canine and human isolates of simian virus 5.</title>
        <authorList>
            <person name="Baty D.U."/>
            <person name="Southern J.A."/>
            <person name="Randall R.E."/>
        </authorList>
    </citation>
    <scope>NUCLEOTIDE SEQUENCE</scope>
</reference>
<evidence type="ECO:0000250" key="1"/>
<evidence type="ECO:0000250" key="2">
    <source>
        <dbReference type="UniProtKB" id="P04853"/>
    </source>
</evidence>
<evidence type="ECO:0000250" key="3">
    <source>
        <dbReference type="UniProtKB" id="P25465"/>
    </source>
</evidence>
<evidence type="ECO:0000250" key="4">
    <source>
        <dbReference type="UniProtKB" id="Q91UL0"/>
    </source>
</evidence>
<evidence type="ECO:0000250" key="5">
    <source>
        <dbReference type="UniProtKB" id="Q9WAF5"/>
    </source>
</evidence>
<evidence type="ECO:0000255" key="6"/>
<evidence type="ECO:0000305" key="7"/>
<organismHost>
    <name type="scientific">Canis lupus familiaris</name>
    <name type="common">Dog</name>
    <name type="synonym">Canis familiaris</name>
    <dbReference type="NCBI Taxonomy" id="9615"/>
</organismHost>
<organismHost>
    <name type="scientific">Homo sapiens</name>
    <name type="common">Human</name>
    <dbReference type="NCBI Taxonomy" id="9606"/>
</organismHost>
<organismHost>
    <name type="scientific">Macaca fascicularis</name>
    <name type="common">Crab-eating macaque</name>
    <name type="synonym">Cynomolgus monkey</name>
    <dbReference type="NCBI Taxonomy" id="9541"/>
</organismHost>
<organismHost>
    <name type="scientific">Macaca mulatta</name>
    <name type="common">Rhesus macaque</name>
    <dbReference type="NCBI Taxonomy" id="9544"/>
</organismHost>
<dbReference type="EC" id="3.2.1.18" evidence="3"/>
<dbReference type="PIR" id="JQ1307">
    <property type="entry name" value="HNNZC3"/>
</dbReference>
<dbReference type="SMR" id="P28885"/>
<dbReference type="CAZy" id="GH83">
    <property type="family name" value="Glycoside Hydrolase Family 83"/>
</dbReference>
<dbReference type="GlyCosmos" id="P28885">
    <property type="glycosylation" value="4 sites, No reported glycans"/>
</dbReference>
<dbReference type="GO" id="GO:0020002">
    <property type="term" value="C:host cell plasma membrane"/>
    <property type="evidence" value="ECO:0007669"/>
    <property type="project" value="UniProtKB-SubCell"/>
</dbReference>
<dbReference type="GO" id="GO:0016020">
    <property type="term" value="C:membrane"/>
    <property type="evidence" value="ECO:0007669"/>
    <property type="project" value="UniProtKB-KW"/>
</dbReference>
<dbReference type="GO" id="GO:0019031">
    <property type="term" value="C:viral envelope"/>
    <property type="evidence" value="ECO:0007669"/>
    <property type="project" value="UniProtKB-KW"/>
</dbReference>
<dbReference type="GO" id="GO:0055036">
    <property type="term" value="C:virion membrane"/>
    <property type="evidence" value="ECO:0007669"/>
    <property type="project" value="UniProtKB-SubCell"/>
</dbReference>
<dbReference type="GO" id="GO:0004308">
    <property type="term" value="F:exo-alpha-sialidase activity"/>
    <property type="evidence" value="ECO:0007669"/>
    <property type="project" value="UniProtKB-EC"/>
</dbReference>
<dbReference type="GO" id="GO:0046789">
    <property type="term" value="F:host cell surface receptor binding"/>
    <property type="evidence" value="ECO:0007669"/>
    <property type="project" value="InterPro"/>
</dbReference>
<dbReference type="GO" id="GO:0046718">
    <property type="term" value="P:symbiont entry into host cell"/>
    <property type="evidence" value="ECO:0007669"/>
    <property type="project" value="UniProtKB-KW"/>
</dbReference>
<dbReference type="GO" id="GO:0019062">
    <property type="term" value="P:virion attachment to host cell"/>
    <property type="evidence" value="ECO:0007669"/>
    <property type="project" value="UniProtKB-KW"/>
</dbReference>
<dbReference type="CDD" id="cd15469">
    <property type="entry name" value="HN"/>
    <property type="match status" value="1"/>
</dbReference>
<dbReference type="FunFam" id="2.120.10.10:FF:000004">
    <property type="entry name" value="Hemagglutinin-neuraminidase"/>
    <property type="match status" value="1"/>
</dbReference>
<dbReference type="Gene3D" id="1.20.5.110">
    <property type="match status" value="1"/>
</dbReference>
<dbReference type="Gene3D" id="2.120.10.10">
    <property type="match status" value="1"/>
</dbReference>
<dbReference type="InterPro" id="IPR016285">
    <property type="entry name" value="Hemagglutn-neuramid"/>
</dbReference>
<dbReference type="InterPro" id="IPR000665">
    <property type="entry name" value="Hemagglutn/HN"/>
</dbReference>
<dbReference type="InterPro" id="IPR036278">
    <property type="entry name" value="Sialidase_sf"/>
</dbReference>
<dbReference type="Pfam" id="PF00423">
    <property type="entry name" value="HN"/>
    <property type="match status" value="1"/>
</dbReference>
<dbReference type="PIRSF" id="PIRSF001072">
    <property type="entry name" value="Hemagglut-neuramid_paramyxoV"/>
    <property type="match status" value="1"/>
</dbReference>
<dbReference type="SUPFAM" id="SSF50939">
    <property type="entry name" value="Sialidases"/>
    <property type="match status" value="1"/>
</dbReference>
<organism>
    <name type="scientific">Parainfluenza virus 5 (isolate Human/LN)</name>
    <name type="common">PIV5</name>
    <name type="synonym">Simian virus 5</name>
    <dbReference type="NCBI Taxonomy" id="31610"/>
    <lineage>
        <taxon>Viruses</taxon>
        <taxon>Riboviria</taxon>
        <taxon>Orthornavirae</taxon>
        <taxon>Negarnaviricota</taxon>
        <taxon>Haploviricotina</taxon>
        <taxon>Monjiviricetes</taxon>
        <taxon>Mononegavirales</taxon>
        <taxon>Paramyxoviridae</taxon>
        <taxon>Rubulavirinae</taxon>
        <taxon>Orthorubulavirus</taxon>
        <taxon>Orthorubulavirus mammalis</taxon>
        <taxon>Mammalian orthorubulavirus 5</taxon>
    </lineage>
</organism>
<comment type="function">
    <text evidence="1">Attaches the virus to sialic acid-containing cell receptors and thereby initiating infection. Binding of HN protein to the receptor induces a conformational change that allows the F protein to trigger virion/cell membranes fusion (By similarity).</text>
</comment>
<comment type="function">
    <text evidence="1">Neuraminidase activity ensures the efficient spread of the virus by dissociating the mature virions from the neuraminic acid containing glycoproteins.</text>
</comment>
<comment type="catalytic activity">
    <reaction evidence="3">
        <text>Hydrolysis of alpha-(2-&gt;3)-, alpha-(2-&gt;6)-, alpha-(2-&gt;8)- glycosidic linkages of terminal sialic acid residues in oligosaccharides, glycoproteins, glycolipids, colominic acid and synthetic substrates.</text>
        <dbReference type="EC" id="3.2.1.18"/>
    </reaction>
</comment>
<comment type="subunit">
    <text evidence="2 5">Homotetramer; composed of disulfide-linked homodimers (By similarity). Interacts with F protein trimer (By similarity).</text>
</comment>
<comment type="subcellular location">
    <subcellularLocation>
        <location evidence="7">Virion membrane</location>
        <topology evidence="7">Single-pass type II membrane protein</topology>
    </subcellularLocation>
    <subcellularLocation>
        <location evidence="7">Host cell membrane</location>
        <topology evidence="7">Single-pass type II membrane protein</topology>
    </subcellularLocation>
</comment>
<comment type="domain">
    <text evidence="5">The C-terminus (head domain) is involved in binding the cellular receptor.</text>
</comment>
<comment type="similarity">
    <text evidence="7">Belongs to the paramyxoviruses hemagglutinin-neuraminidase family.</text>
</comment>
<protein>
    <recommendedName>
        <fullName>Hemagglutinin-neuraminidase</fullName>
        <ecNumber evidence="3">3.2.1.18</ecNumber>
    </recommendedName>
</protein>
<name>HN_PIV5L</name>
<accession>P28885</accession>
<sequence length="565" mass="62138">MVAEDAPVRGTCRVLFRTTTLLFLCTLLSLSISILYESLITQNQIMSQAGSTGSNSGLGSITDLLNNILSVANQIIYNSAVALPLQLDTLESTLLTAFKSLQTSDKLEQNCSWGAALINDNRYINGINQFYFSIAEGRNLTLGPLLNILSFIPTATTPEGCTRIPSFSLTKTHWCYTHNVILNGCQDHVSSNQFVSMGIIEPTSAGFPSFRTLKTLYLSDGVNRKSCSISTVPGGCMMYCFVSTQPERDDYFSAAPPEQRIIIMYYNDTIVERIINPPGVLDVWATLNPGTGSGVYYLGWVLFPIYGGVIKDTSLWNSQANKYFIPQMVAALCSQNQATQVQNAKSSYYSSWFGNRMIQSGILACPLQQDLTNECLVLPFSNDQVLMGAEGRLYMYGDSVYYYQRSNSWWPMTMLYKVTITFTNGQPSAISAQNVPTQQVPRPGTGDCSATNRCPGFCLTGVYADAWLLTNPSSTSTFGSEATFTGSYLNTATQRINPTMYIANNTQIISSQQFGSSGQEAAYGHTTCFRDTGSVMVYCIYIIELSSSLLGQFQIVPFIRQVTLS</sequence>
<feature type="chain" id="PRO_0000142644" description="Hemagglutinin-neuraminidase">
    <location>
        <begin position="1"/>
        <end position="565"/>
    </location>
</feature>
<feature type="topological domain" description="Intravirion" evidence="6">
    <location>
        <begin position="1"/>
        <end position="19"/>
    </location>
</feature>
<feature type="transmembrane region" description="Helical" evidence="6">
    <location>
        <begin position="20"/>
        <end position="40"/>
    </location>
</feature>
<feature type="topological domain" description="Virion surface" evidence="6">
    <location>
        <begin position="41"/>
        <end position="565"/>
    </location>
</feature>
<feature type="region of interest" description="Involved in neuraminidase activity" evidence="4">
    <location>
        <begin position="223"/>
        <end position="228"/>
    </location>
</feature>
<feature type="glycosylation site" description="N-linked (GlcNAc...) asparagine; by host" evidence="6">
    <location>
        <position position="110"/>
    </location>
</feature>
<feature type="glycosylation site" description="N-linked (GlcNAc...) asparagine; by host" evidence="6">
    <location>
        <position position="139"/>
    </location>
</feature>
<feature type="glycosylation site" description="N-linked (GlcNAc...) asparagine; by host" evidence="6">
    <location>
        <position position="267"/>
    </location>
</feature>
<feature type="glycosylation site" description="N-linked (GlcNAc...) asparagine; by host" evidence="6">
    <location>
        <position position="504"/>
    </location>
</feature>
<feature type="disulfide bond" evidence="5">
    <location>
        <begin position="161"/>
        <end position="185"/>
    </location>
</feature>
<feature type="disulfide bond" evidence="5">
    <location>
        <begin position="175"/>
        <end position="236"/>
    </location>
</feature>
<feature type="disulfide bond" evidence="5">
    <location>
        <begin position="227"/>
        <end position="240"/>
    </location>
</feature>
<feature type="disulfide bond" evidence="5">
    <location>
        <begin position="333"/>
        <end position="454"/>
    </location>
</feature>
<feature type="disulfide bond" evidence="5">
    <location>
        <begin position="365"/>
        <end position="375"/>
    </location>
</feature>
<feature type="disulfide bond" evidence="5">
    <location>
        <begin position="448"/>
        <end position="458"/>
    </location>
</feature>
<feature type="disulfide bond" evidence="5">
    <location>
        <begin position="528"/>
        <end position="539"/>
    </location>
</feature>
<proteinExistence type="inferred from homology"/>